<keyword id="KW-0002">3D-structure</keyword>
<keyword id="KW-0007">Acetylation</keyword>
<keyword id="KW-0025">Alternative splicing</keyword>
<keyword id="KW-0072">Autophagy</keyword>
<keyword id="KW-0131">Cell cycle</keyword>
<keyword id="KW-0132">Cell division</keyword>
<keyword id="KW-0168">Coated pit</keyword>
<keyword id="KW-0963">Cytoplasm</keyword>
<keyword id="KW-0968">Cytoplasmic vesicle</keyword>
<keyword id="KW-0206">Cytoskeleton</keyword>
<keyword id="KW-0903">Direct protein sequencing</keyword>
<keyword id="KW-0225">Disease variant</keyword>
<keyword id="KW-0991">Intellectual disability</keyword>
<keyword id="KW-0472">Membrane</keyword>
<keyword id="KW-0498">Mitosis</keyword>
<keyword id="KW-0597">Phosphoprotein</keyword>
<keyword id="KW-1267">Proteomics identification</keyword>
<keyword id="KW-1185">Reference proteome</keyword>
<keyword id="KW-0677">Repeat</keyword>
<dbReference type="EMBL" id="D21260">
    <property type="protein sequence ID" value="BAA04801.2"/>
    <property type="status" value="ALT_INIT"/>
    <property type="molecule type" value="mRNA"/>
</dbReference>
<dbReference type="EMBL" id="BX640615">
    <property type="protein sequence ID" value="CAE45761.1"/>
    <property type="molecule type" value="mRNA"/>
</dbReference>
<dbReference type="EMBL" id="CH471109">
    <property type="protein sequence ID" value="EAW94396.1"/>
    <property type="molecule type" value="Genomic_DNA"/>
</dbReference>
<dbReference type="EMBL" id="CH471109">
    <property type="protein sequence ID" value="EAW94399.1"/>
    <property type="molecule type" value="Genomic_DNA"/>
</dbReference>
<dbReference type="EMBL" id="BC051800">
    <property type="protein sequence ID" value="AAH51800.1"/>
    <property type="molecule type" value="mRNA"/>
</dbReference>
<dbReference type="EMBL" id="BC054489">
    <property type="protein sequence ID" value="AAH54489.1"/>
    <property type="molecule type" value="mRNA"/>
</dbReference>
<dbReference type="EMBL" id="X55878">
    <property type="protein sequence ID" value="CAA39363.1"/>
    <property type="molecule type" value="mRNA"/>
</dbReference>
<dbReference type="CCDS" id="CCDS32696.1">
    <molecule id="Q00610-1"/>
</dbReference>
<dbReference type="PIR" id="A40573">
    <property type="entry name" value="A40573"/>
</dbReference>
<dbReference type="RefSeq" id="NP_004850.1">
    <molecule id="Q00610-1"/>
    <property type="nucleotide sequence ID" value="NM_004859.4"/>
</dbReference>
<dbReference type="PDB" id="2XZG">
    <property type="method" value="X-ray"/>
    <property type="resolution" value="1.70 A"/>
    <property type="chains" value="A=1-364"/>
</dbReference>
<dbReference type="PDB" id="4G55">
    <property type="method" value="X-ray"/>
    <property type="resolution" value="1.69 A"/>
    <property type="chains" value="A=1-364"/>
</dbReference>
<dbReference type="PDB" id="6E4L">
    <property type="method" value="X-ray"/>
    <property type="resolution" value="1.60 A"/>
    <property type="chains" value="A=1-364"/>
</dbReference>
<dbReference type="PDB" id="6QNN">
    <property type="method" value="X-ray"/>
    <property type="resolution" value="2.03 A"/>
    <property type="chains" value="A=1-364"/>
</dbReference>
<dbReference type="PDB" id="6QNP">
    <property type="method" value="X-ray"/>
    <property type="resolution" value="2.70 A"/>
    <property type="chains" value="A/B/C/D=1-364"/>
</dbReference>
<dbReference type="PDB" id="7BN1">
    <property type="method" value="X-ray"/>
    <property type="resolution" value="1.97 A"/>
    <property type="chains" value="A/B=1-364"/>
</dbReference>
<dbReference type="PDB" id="7BN2">
    <property type="method" value="X-ray"/>
    <property type="resolution" value="1.97 A"/>
    <property type="chains" value="AAA/BBB=1-364"/>
</dbReference>
<dbReference type="PDB" id="7ZX4">
    <property type="method" value="X-ray"/>
    <property type="resolution" value="2.08 A"/>
    <property type="chains" value="A/B=1-364"/>
</dbReference>
<dbReference type="PDB" id="9C0Y">
    <property type="method" value="X-ray"/>
    <property type="resolution" value="1.40 A"/>
    <property type="chains" value="A=1-364"/>
</dbReference>
<dbReference type="PDB" id="9C0Z">
    <property type="method" value="X-ray"/>
    <property type="resolution" value="1.51 A"/>
    <property type="chains" value="A=2-364"/>
</dbReference>
<dbReference type="PDBsum" id="2XZG"/>
<dbReference type="PDBsum" id="4G55"/>
<dbReference type="PDBsum" id="6E4L"/>
<dbReference type="PDBsum" id="6QNN"/>
<dbReference type="PDBsum" id="6QNP"/>
<dbReference type="PDBsum" id="7BN1"/>
<dbReference type="PDBsum" id="7BN2"/>
<dbReference type="PDBsum" id="7ZX4"/>
<dbReference type="PDBsum" id="9C0Y"/>
<dbReference type="PDBsum" id="9C0Z"/>
<dbReference type="SMR" id="Q00610"/>
<dbReference type="BioGRID" id="107623">
    <property type="interactions" value="690"/>
</dbReference>
<dbReference type="CORUM" id="Q00610"/>
<dbReference type="ELM" id="Q00610"/>
<dbReference type="FunCoup" id="Q00610">
    <property type="interactions" value="3315"/>
</dbReference>
<dbReference type="IntAct" id="Q00610">
    <property type="interactions" value="281"/>
</dbReference>
<dbReference type="MINT" id="Q00610"/>
<dbReference type="STRING" id="9606.ENSP00000479606"/>
<dbReference type="BindingDB" id="Q00610"/>
<dbReference type="ChEMBL" id="CHEMBL3108634"/>
<dbReference type="MoonDB" id="Q00610">
    <property type="type" value="Curated"/>
</dbReference>
<dbReference type="TCDB" id="8.A.137.1.1">
    <property type="family name" value="the clathrin (clathrin) family"/>
</dbReference>
<dbReference type="GlyGen" id="Q00610">
    <property type="glycosylation" value="2 sites, 1 O-linked glycan (2 sites)"/>
</dbReference>
<dbReference type="iPTMnet" id="Q00610"/>
<dbReference type="MetOSite" id="Q00610"/>
<dbReference type="PhosphoSitePlus" id="Q00610"/>
<dbReference type="SwissPalm" id="Q00610"/>
<dbReference type="BioMuta" id="CLTC"/>
<dbReference type="DMDM" id="1705916"/>
<dbReference type="CPTAC" id="CPTAC-182"/>
<dbReference type="CPTAC" id="CPTAC-183"/>
<dbReference type="jPOST" id="Q00610"/>
<dbReference type="MassIVE" id="Q00610"/>
<dbReference type="PaxDb" id="9606-ENSP00000479606"/>
<dbReference type="PeptideAtlas" id="Q00610"/>
<dbReference type="PRIDE" id="Q00610"/>
<dbReference type="ProteomicsDB" id="57862">
    <molecule id="Q00610-1"/>
</dbReference>
<dbReference type="ProteomicsDB" id="57863">
    <molecule id="Q00610-2"/>
</dbReference>
<dbReference type="Pumba" id="Q00610"/>
<dbReference type="ABCD" id="Q00610">
    <property type="antibodies" value="1 sequenced antibody"/>
</dbReference>
<dbReference type="Antibodypedia" id="4164">
    <property type="antibodies" value="490 antibodies from 40 providers"/>
</dbReference>
<dbReference type="DNASU" id="1213"/>
<dbReference type="Ensembl" id="ENST00000269122.8">
    <molecule id="Q00610-1"/>
    <property type="protein sequence ID" value="ENSP00000269122.3"/>
    <property type="gene ID" value="ENSG00000141367.14"/>
</dbReference>
<dbReference type="Ensembl" id="ENST00000393043.5">
    <molecule id="Q00610-2"/>
    <property type="protein sequence ID" value="ENSP00000376763.1"/>
    <property type="gene ID" value="ENSG00000141367.14"/>
</dbReference>
<dbReference type="Ensembl" id="ENST00000700707.1">
    <molecule id="Q00610-1"/>
    <property type="protein sequence ID" value="ENSP00000515147.1"/>
    <property type="gene ID" value="ENSG00000141367.14"/>
</dbReference>
<dbReference type="GeneID" id="1213"/>
<dbReference type="KEGG" id="hsa:1213"/>
<dbReference type="MANE-Select" id="ENST00000269122.8">
    <property type="protein sequence ID" value="ENSP00000269122.3"/>
    <property type="RefSeq nucleotide sequence ID" value="NM_004859.4"/>
    <property type="RefSeq protein sequence ID" value="NP_004850.1"/>
</dbReference>
<dbReference type="UCSC" id="uc002ixp.4">
    <molecule id="Q00610-1"/>
    <property type="organism name" value="human"/>
</dbReference>
<dbReference type="AGR" id="HGNC:2092"/>
<dbReference type="CTD" id="1213"/>
<dbReference type="DisGeNET" id="1213"/>
<dbReference type="GeneCards" id="CLTC"/>
<dbReference type="HGNC" id="HGNC:2092">
    <property type="gene designation" value="CLTC"/>
</dbReference>
<dbReference type="HPA" id="ENSG00000141367">
    <property type="expression patterns" value="Low tissue specificity"/>
</dbReference>
<dbReference type="MalaCards" id="CLTC"/>
<dbReference type="MIM" id="118955">
    <property type="type" value="gene"/>
</dbReference>
<dbReference type="MIM" id="617854">
    <property type="type" value="phenotype"/>
</dbReference>
<dbReference type="neXtProt" id="NX_Q00610"/>
<dbReference type="OpenTargets" id="ENSG00000141367"/>
<dbReference type="Orphanet" id="178469">
    <property type="disease" value="Autosomal dominant non-syndromic intellectual disability"/>
</dbReference>
<dbReference type="Orphanet" id="178342">
    <property type="disease" value="Inflammatory myofibroblastic tumor"/>
</dbReference>
<dbReference type="Orphanet" id="319308">
    <property type="disease" value="MiT family translocation renal cell carcinoma"/>
</dbReference>
<dbReference type="Orphanet" id="442835">
    <property type="disease" value="Non-specific early-onset epileptic encephalopathy"/>
</dbReference>
<dbReference type="PharmGKB" id="PA26618"/>
<dbReference type="VEuPathDB" id="HostDB:ENSG00000141367"/>
<dbReference type="eggNOG" id="KOG0985">
    <property type="taxonomic scope" value="Eukaryota"/>
</dbReference>
<dbReference type="GeneTree" id="ENSGT00950000183166"/>
<dbReference type="HOGENOM" id="CLU_002136_0_0_1"/>
<dbReference type="InParanoid" id="Q00610"/>
<dbReference type="OrthoDB" id="2113814at2759"/>
<dbReference type="PAN-GO" id="Q00610">
    <property type="GO annotations" value="7 GO annotations based on evolutionary models"/>
</dbReference>
<dbReference type="PhylomeDB" id="Q00610"/>
<dbReference type="TreeFam" id="TF300059"/>
<dbReference type="PathwayCommons" id="Q00610"/>
<dbReference type="Reactome" id="R-HSA-168275">
    <property type="pathway name" value="Entry of Influenza Virion into Host Cell via Endocytosis"/>
</dbReference>
<dbReference type="Reactome" id="R-HSA-177504">
    <property type="pathway name" value="Retrograde neurotrophin signalling"/>
</dbReference>
<dbReference type="Reactome" id="R-HSA-190873">
    <property type="pathway name" value="Gap junction degradation"/>
</dbReference>
<dbReference type="Reactome" id="R-HSA-196025">
    <property type="pathway name" value="Formation of annular gap junctions"/>
</dbReference>
<dbReference type="Reactome" id="R-HSA-2132295">
    <molecule id="Q00610-1"/>
    <property type="pathway name" value="MHC class II antigen presentation"/>
</dbReference>
<dbReference type="Reactome" id="R-HSA-3928665">
    <property type="pathway name" value="EPH-ephrin mediated repulsion of cells"/>
</dbReference>
<dbReference type="Reactome" id="R-HSA-432720">
    <molecule id="Q00610-1"/>
    <property type="pathway name" value="Lysosome Vesicle Biogenesis"/>
</dbReference>
<dbReference type="Reactome" id="R-HSA-432722">
    <molecule id="Q00610-1"/>
    <property type="pathway name" value="Golgi Associated Vesicle Biogenesis"/>
</dbReference>
<dbReference type="Reactome" id="R-HSA-437239">
    <property type="pathway name" value="Recycling pathway of L1"/>
</dbReference>
<dbReference type="Reactome" id="R-HSA-5099900">
    <property type="pathway name" value="WNT5A-dependent internalization of FZD4"/>
</dbReference>
<dbReference type="Reactome" id="R-HSA-5140745">
    <property type="pathway name" value="WNT5A-dependent internalization of FZD2, FZD5 and ROR2"/>
</dbReference>
<dbReference type="Reactome" id="R-HSA-8856825">
    <property type="pathway name" value="Cargo recognition for clathrin-mediated endocytosis"/>
</dbReference>
<dbReference type="Reactome" id="R-HSA-8856828">
    <property type="pathway name" value="Clathrin-mediated endocytosis"/>
</dbReference>
<dbReference type="Reactome" id="R-HSA-8866427">
    <property type="pathway name" value="VLDLR internalisation and degradation"/>
</dbReference>
<dbReference type="Reactome" id="R-HSA-8964038">
    <property type="pathway name" value="LDL clearance"/>
</dbReference>
<dbReference type="Reactome" id="R-HSA-9013420">
    <property type="pathway name" value="RHOU GTPase cycle"/>
</dbReference>
<dbReference type="Reactome" id="R-HSA-9013424">
    <property type="pathway name" value="RHOV GTPase cycle"/>
</dbReference>
<dbReference type="Reactome" id="R-HSA-9700645">
    <property type="pathway name" value="ALK mutants bind TKIs"/>
</dbReference>
<dbReference type="Reactome" id="R-HSA-9725370">
    <property type="pathway name" value="Signaling by ALK fusions and activated point mutants"/>
</dbReference>
<dbReference type="SignaLink" id="Q00610"/>
<dbReference type="SIGNOR" id="Q00610"/>
<dbReference type="BioGRID-ORCS" id="1213">
    <property type="hits" value="678 hits in 1175 CRISPR screens"/>
</dbReference>
<dbReference type="CD-CODE" id="91857CE7">
    <property type="entry name" value="Nucleolus"/>
</dbReference>
<dbReference type="CD-CODE" id="FB4E32DD">
    <property type="entry name" value="Presynaptic clusters and postsynaptic densities"/>
</dbReference>
<dbReference type="ChiTaRS" id="CLTC">
    <property type="organism name" value="human"/>
</dbReference>
<dbReference type="EvolutionaryTrace" id="Q00610"/>
<dbReference type="GeneWiki" id="CLTC"/>
<dbReference type="GenomeRNAi" id="1213"/>
<dbReference type="Pharos" id="Q00610">
    <property type="development level" value="Tbio"/>
</dbReference>
<dbReference type="PRO" id="PR:Q00610"/>
<dbReference type="Proteomes" id="UP000005640">
    <property type="component" value="Chromosome 17"/>
</dbReference>
<dbReference type="RNAct" id="Q00610">
    <property type="molecule type" value="protein"/>
</dbReference>
<dbReference type="Bgee" id="ENSG00000141367">
    <property type="expression patterns" value="Expressed in pons and 210 other cell types or tissues"/>
</dbReference>
<dbReference type="ExpressionAtlas" id="Q00610">
    <property type="expression patterns" value="baseline and differential"/>
</dbReference>
<dbReference type="GO" id="GO:0034451">
    <property type="term" value="C:centriolar satellite"/>
    <property type="evidence" value="ECO:0000314"/>
    <property type="project" value="HPA"/>
</dbReference>
<dbReference type="GO" id="GO:0030118">
    <property type="term" value="C:clathrin coat"/>
    <property type="evidence" value="ECO:0000315"/>
    <property type="project" value="CAFA"/>
</dbReference>
<dbReference type="GO" id="GO:0030132">
    <property type="term" value="C:clathrin coat of coated pit"/>
    <property type="evidence" value="ECO:0007669"/>
    <property type="project" value="InterPro"/>
</dbReference>
<dbReference type="GO" id="GO:0030130">
    <property type="term" value="C:clathrin coat of trans-Golgi network vesicle"/>
    <property type="evidence" value="ECO:0007669"/>
    <property type="project" value="InterPro"/>
</dbReference>
<dbReference type="GO" id="GO:0071439">
    <property type="term" value="C:clathrin complex"/>
    <property type="evidence" value="ECO:0000314"/>
    <property type="project" value="FlyBase"/>
</dbReference>
<dbReference type="GO" id="GO:0045334">
    <property type="term" value="C:clathrin-coated endocytic vesicle"/>
    <property type="evidence" value="ECO:0000318"/>
    <property type="project" value="GO_Central"/>
</dbReference>
<dbReference type="GO" id="GO:0030669">
    <property type="term" value="C:clathrin-coated endocytic vesicle membrane"/>
    <property type="evidence" value="ECO:0000304"/>
    <property type="project" value="Reactome"/>
</dbReference>
<dbReference type="GO" id="GO:0030136">
    <property type="term" value="C:clathrin-coated vesicle"/>
    <property type="evidence" value="ECO:0000314"/>
    <property type="project" value="UniProtKB"/>
</dbReference>
<dbReference type="GO" id="GO:0005829">
    <property type="term" value="C:cytosol"/>
    <property type="evidence" value="ECO:0000314"/>
    <property type="project" value="HPA"/>
</dbReference>
<dbReference type="GO" id="GO:0036020">
    <property type="term" value="C:endolysosome membrane"/>
    <property type="evidence" value="ECO:0000304"/>
    <property type="project" value="Reactome"/>
</dbReference>
<dbReference type="GO" id="GO:0005768">
    <property type="term" value="C:endosome"/>
    <property type="evidence" value="ECO:0000314"/>
    <property type="project" value="HPA"/>
</dbReference>
<dbReference type="GO" id="GO:0070062">
    <property type="term" value="C:extracellular exosome"/>
    <property type="evidence" value="ECO:0007005"/>
    <property type="project" value="UniProtKB"/>
</dbReference>
<dbReference type="GO" id="GO:1903561">
    <property type="term" value="C:extracellular vesicle"/>
    <property type="evidence" value="ECO:0007005"/>
    <property type="project" value="UniProtKB"/>
</dbReference>
<dbReference type="GO" id="GO:0005925">
    <property type="term" value="C:focal adhesion"/>
    <property type="evidence" value="ECO:0007005"/>
    <property type="project" value="UniProtKB"/>
</dbReference>
<dbReference type="GO" id="GO:0043231">
    <property type="term" value="C:intracellular membrane-bounded organelle"/>
    <property type="evidence" value="ECO:0000314"/>
    <property type="project" value="HPA"/>
</dbReference>
<dbReference type="GO" id="GO:0005764">
    <property type="term" value="C:lysosome"/>
    <property type="evidence" value="ECO:0000314"/>
    <property type="project" value="HPA"/>
</dbReference>
<dbReference type="GO" id="GO:0042470">
    <property type="term" value="C:melanosome"/>
    <property type="evidence" value="ECO:0007669"/>
    <property type="project" value="UniProtKB-SubCell"/>
</dbReference>
<dbReference type="GO" id="GO:0016020">
    <property type="term" value="C:membrane"/>
    <property type="evidence" value="ECO:0007005"/>
    <property type="project" value="UniProtKB"/>
</dbReference>
<dbReference type="GO" id="GO:0072686">
    <property type="term" value="C:mitotic spindle"/>
    <property type="evidence" value="ECO:0000314"/>
    <property type="project" value="HPA"/>
</dbReference>
<dbReference type="GO" id="GO:1990498">
    <property type="term" value="C:mitotic spindle microtubule"/>
    <property type="evidence" value="ECO:0000314"/>
    <property type="project" value="UniProtKB"/>
</dbReference>
<dbReference type="GO" id="GO:0005886">
    <property type="term" value="C:plasma membrane"/>
    <property type="evidence" value="ECO:0000304"/>
    <property type="project" value="Reactome"/>
</dbReference>
<dbReference type="GO" id="GO:0032991">
    <property type="term" value="C:protein-containing complex"/>
    <property type="evidence" value="ECO:0000314"/>
    <property type="project" value="MGI"/>
</dbReference>
<dbReference type="GO" id="GO:0005819">
    <property type="term" value="C:spindle"/>
    <property type="evidence" value="ECO:0000314"/>
    <property type="project" value="UniProtKB"/>
</dbReference>
<dbReference type="GO" id="GO:0032588">
    <property type="term" value="C:trans-Golgi network membrane"/>
    <property type="evidence" value="ECO:0000304"/>
    <property type="project" value="Reactome"/>
</dbReference>
<dbReference type="GO" id="GO:0032051">
    <property type="term" value="F:clathrin light chain binding"/>
    <property type="evidence" value="ECO:0000353"/>
    <property type="project" value="FlyBase"/>
</dbReference>
<dbReference type="GO" id="GO:0097718">
    <property type="term" value="F:disordered domain specific binding"/>
    <property type="evidence" value="ECO:0000353"/>
    <property type="project" value="CAFA"/>
</dbReference>
<dbReference type="GO" id="GO:0003725">
    <property type="term" value="F:double-stranded RNA binding"/>
    <property type="evidence" value="ECO:0000314"/>
    <property type="project" value="MGI"/>
</dbReference>
<dbReference type="GO" id="GO:0050750">
    <property type="term" value="F:low-density lipoprotein particle receptor binding"/>
    <property type="evidence" value="ECO:0000353"/>
    <property type="project" value="ARUK-UCL"/>
</dbReference>
<dbReference type="GO" id="GO:0019901">
    <property type="term" value="F:protein kinase binding"/>
    <property type="evidence" value="ECO:0000250"/>
    <property type="project" value="ParkinsonsUK-UCL"/>
</dbReference>
<dbReference type="GO" id="GO:0003723">
    <property type="term" value="F:RNA binding"/>
    <property type="evidence" value="ECO:0007005"/>
    <property type="project" value="UniProtKB"/>
</dbReference>
<dbReference type="GO" id="GO:0005198">
    <property type="term" value="F:structural molecule activity"/>
    <property type="evidence" value="ECO:0000303"/>
    <property type="project" value="UniProtKB"/>
</dbReference>
<dbReference type="GO" id="GO:1990381">
    <property type="term" value="F:ubiquitin-specific protease binding"/>
    <property type="evidence" value="ECO:0000353"/>
    <property type="project" value="UniProtKB"/>
</dbReference>
<dbReference type="GO" id="GO:0150093">
    <property type="term" value="P:amyloid-beta clearance by transcytosis"/>
    <property type="evidence" value="ECO:0000315"/>
    <property type="project" value="ARUK-UCL"/>
</dbReference>
<dbReference type="GO" id="GO:0006914">
    <property type="term" value="P:autophagy"/>
    <property type="evidence" value="ECO:0007669"/>
    <property type="project" value="UniProtKB-KW"/>
</dbReference>
<dbReference type="GO" id="GO:0051301">
    <property type="term" value="P:cell division"/>
    <property type="evidence" value="ECO:0007669"/>
    <property type="project" value="UniProtKB-KW"/>
</dbReference>
<dbReference type="GO" id="GO:0048268">
    <property type="term" value="P:clathrin coat assembly"/>
    <property type="evidence" value="ECO:0000315"/>
    <property type="project" value="CAFA"/>
</dbReference>
<dbReference type="GO" id="GO:0072318">
    <property type="term" value="P:clathrin coat disassembly"/>
    <property type="evidence" value="ECO:0000250"/>
    <property type="project" value="UniProtKB"/>
</dbReference>
<dbReference type="GO" id="GO:0072583">
    <property type="term" value="P:clathrin-dependent endocytosis"/>
    <property type="evidence" value="ECO:0000315"/>
    <property type="project" value="ARUK-UCL"/>
</dbReference>
<dbReference type="GO" id="GO:0006886">
    <property type="term" value="P:intracellular protein transport"/>
    <property type="evidence" value="ECO:0000303"/>
    <property type="project" value="UniProtKB"/>
</dbReference>
<dbReference type="GO" id="GO:0000278">
    <property type="term" value="P:mitotic cell cycle"/>
    <property type="evidence" value="ECO:0000315"/>
    <property type="project" value="UniProtKB"/>
</dbReference>
<dbReference type="GO" id="GO:1900126">
    <property type="term" value="P:negative regulation of hyaluronan biosynthetic process"/>
    <property type="evidence" value="ECO:0000314"/>
    <property type="project" value="UniProtKB"/>
</dbReference>
<dbReference type="GO" id="GO:1903077">
    <property type="term" value="P:negative regulation of protein localization to plasma membrane"/>
    <property type="evidence" value="ECO:0000315"/>
    <property type="project" value="UniProtKB"/>
</dbReference>
<dbReference type="GO" id="GO:0001649">
    <property type="term" value="P:osteoblast differentiation"/>
    <property type="evidence" value="ECO:0007005"/>
    <property type="project" value="UniProtKB"/>
</dbReference>
<dbReference type="GO" id="GO:0031623">
    <property type="term" value="P:receptor internalization"/>
    <property type="evidence" value="ECO:0000315"/>
    <property type="project" value="BHF-UCL"/>
</dbReference>
<dbReference type="GO" id="GO:0006898">
    <property type="term" value="P:receptor-mediated endocytosis"/>
    <property type="evidence" value="ECO:0000315"/>
    <property type="project" value="UniProtKB"/>
</dbReference>
<dbReference type="GO" id="GO:0060236">
    <property type="term" value="P:regulation of mitotic spindle organization"/>
    <property type="evidence" value="ECO:0000315"/>
    <property type="project" value="UniProtKB"/>
</dbReference>
<dbReference type="GO" id="GO:0042147">
    <property type="term" value="P:retrograde transport, endosome to Golgi"/>
    <property type="evidence" value="ECO:0000315"/>
    <property type="project" value="UniProtKB"/>
</dbReference>
<dbReference type="GO" id="GO:0033572">
    <property type="term" value="P:transferrin transport"/>
    <property type="evidence" value="ECO:0000315"/>
    <property type="project" value="BHF-UCL"/>
</dbReference>
<dbReference type="FunFam" id="1.25.40.10:FF:000001">
    <property type="entry name" value="Clathrin heavy chain"/>
    <property type="match status" value="1"/>
</dbReference>
<dbReference type="FunFam" id="1.25.40.10:FF:000002">
    <property type="entry name" value="Clathrin heavy chain"/>
    <property type="match status" value="1"/>
</dbReference>
<dbReference type="FunFam" id="1.25.40.10:FF:000007">
    <property type="entry name" value="Clathrin heavy chain"/>
    <property type="match status" value="1"/>
</dbReference>
<dbReference type="FunFam" id="1.25.40.10:FF:000095">
    <property type="entry name" value="Clathrin heavy chain"/>
    <property type="match status" value="1"/>
</dbReference>
<dbReference type="FunFam" id="1.25.40.730:FF:000001">
    <property type="entry name" value="Clathrin heavy chain"/>
    <property type="match status" value="1"/>
</dbReference>
<dbReference type="FunFam" id="2.130.10.110:FF:000001">
    <property type="entry name" value="Clathrin heavy chain"/>
    <property type="match status" value="1"/>
</dbReference>
<dbReference type="Gene3D" id="1.25.40.730">
    <property type="match status" value="1"/>
</dbReference>
<dbReference type="Gene3D" id="2.130.10.110">
    <property type="entry name" value="Clathrin heavy-chain terminal domain"/>
    <property type="match status" value="1"/>
</dbReference>
<dbReference type="Gene3D" id="1.25.40.10">
    <property type="entry name" value="Tetratricopeptide repeat domain"/>
    <property type="match status" value="4"/>
</dbReference>
<dbReference type="IDEAL" id="IID00662"/>
<dbReference type="InterPro" id="IPR016024">
    <property type="entry name" value="ARM-type_fold"/>
</dbReference>
<dbReference type="InterPro" id="IPR055358">
    <property type="entry name" value="CHCR"/>
</dbReference>
<dbReference type="InterPro" id="IPR000547">
    <property type="entry name" value="Clathrin_H-chain/VPS_repeat"/>
</dbReference>
<dbReference type="InterPro" id="IPR015348">
    <property type="entry name" value="Clathrin_H-chain_linker_core"/>
</dbReference>
<dbReference type="InterPro" id="IPR016025">
    <property type="entry name" value="Clathrin_H-chain_N"/>
</dbReference>
<dbReference type="InterPro" id="IPR022365">
    <property type="entry name" value="Clathrin_H-chain_propeller_rpt"/>
</dbReference>
<dbReference type="InterPro" id="IPR016341">
    <property type="entry name" value="Clathrin_heavy_chain"/>
</dbReference>
<dbReference type="InterPro" id="IPR011990">
    <property type="entry name" value="TPR-like_helical_dom_sf"/>
</dbReference>
<dbReference type="PANTHER" id="PTHR10292:SF7">
    <property type="entry name" value="CLATHRIN HEAVY CHAIN 1"/>
    <property type="match status" value="1"/>
</dbReference>
<dbReference type="PANTHER" id="PTHR10292">
    <property type="entry name" value="CLATHRIN HEAVY CHAIN RELATED"/>
    <property type="match status" value="1"/>
</dbReference>
<dbReference type="Pfam" id="PF00637">
    <property type="entry name" value="Clathrin"/>
    <property type="match status" value="7"/>
</dbReference>
<dbReference type="Pfam" id="PF09268">
    <property type="entry name" value="Clathrin-link"/>
    <property type="match status" value="1"/>
</dbReference>
<dbReference type="Pfam" id="PF13838">
    <property type="entry name" value="Clathrin_H_link"/>
    <property type="match status" value="1"/>
</dbReference>
<dbReference type="Pfam" id="PF01394">
    <property type="entry name" value="Clathrin_propel"/>
    <property type="match status" value="5"/>
</dbReference>
<dbReference type="PIRSF" id="PIRSF002290">
    <property type="entry name" value="Clathrin_H_chain"/>
    <property type="match status" value="1"/>
</dbReference>
<dbReference type="SMART" id="SM00299">
    <property type="entry name" value="CLH"/>
    <property type="match status" value="7"/>
</dbReference>
<dbReference type="SUPFAM" id="SSF48371">
    <property type="entry name" value="ARM repeat"/>
    <property type="match status" value="6"/>
</dbReference>
<dbReference type="SUPFAM" id="SSF50989">
    <property type="entry name" value="Clathrin heavy-chain terminal domain"/>
    <property type="match status" value="1"/>
</dbReference>
<dbReference type="PROSITE" id="PS50236">
    <property type="entry name" value="CHCR"/>
    <property type="match status" value="7"/>
</dbReference>
<name>CLH1_HUMAN</name>
<accession>Q00610</accession>
<accession>D3DU00</accession>
<accession>Q6N0A0</accession>
<accession>Q86TF2</accession>
<gene>
    <name evidence="28 29 31" type="primary">CLTC</name>
    <name type="synonym">CLH17</name>
    <name type="synonym">CLTCL2</name>
    <name type="synonym">KIAA0034</name>
</gene>
<sequence length="1675" mass="191615">MAQILPIRFQEHLQLQNLGINPANIGFSTLTMESDKFICIREKVGEQAQVVIIDMNDPSNPIRRPISADSAIMNPASKVIALKAGKTLQIFNIEMKSKMKAHTMTDDVTFWKWISLNTVALVTDNAVYHWSMEGESQPVKMFDRHSSLAGCQIINYRTDAKQKWLLLTGISAQQNRVVGAMQLYSVDRKVSQPIEGHAASFAQFKMEGNAEESTLFCFAVRGQAGGKLHIIEVGTPPTGNQPFPKKAVDVFFPPEAQNDFPVAMQISEKHDVVFLITKYGYIHLYDLETGTCIYMNRISGETIFVTAPHEATAGIIGVNRKGQVLSVCVEEENIIPYITNVLQNPDLALRMAVRNNLAGAEELFARKFNALFAQGNYSEAAKVAANAPKGILRTPDTIRRFQSVPAQPGQTSPLLQYFGILLDQGQLNKYESLELCRPVLQQGRKQLLEKWLKEDKLECSEELGDLVKSVDPTLALSVYLRANVPNKVIQCFAETGQVQKIVLYAKKVGYTPDWIFLLRNVMRISPDQGQQFAQMLVQDEEPLADITQIVDVFMEYNLIQQCTAFLLDALKNNRPSEGPLQTRLLEMNLMHAPQVADAILGNQMFTHYDRAHIAQLCEKAGLLQRALEHFTDLYDIKRAVVHTHLLNPEWLVNYFGSLSVEDSLECLRAMLSANIRQNLQICVQVASKYHEQLSTQSLIELFESFKSFEGLFYFLGSIVNFSQDPDVHFKYIQAACKTGQIKEVERICRESNCYDPERVKNFLKEAKLTDQLPLIIVCDRFDFVHDLVLYLYRNNLQKYIEIYVQKVNPSRLPVVIGGLLDVDCSEDVIKNLILVVRGQFSTDELVAEVEKRNRLKLLLPWLEARIHEGCEEPATHNALAKIYIDSNNNPERFLRENPYYDSRVVGKYCEKRDPHLACVAYERGQCDLELINVCNENSLFKSLSRYLVRRKDPELWGSVLLESNPYRRPLIDQVVQTALSETQDPEEVSVTVKAFMTADLPNELIELLEKIVLDNSVFSEHRNLQNLLILTAIKADRTRVMEYINRLDNYDAPDIANIAISNELFEEAFAIFRKFDVNTSAVQVLIEHIGNLDRAYEFAERCNEPAVWSQLAKAQLQKGMVKEAIDSYIKADDPSSYMEVVQAANTSGNWEELVKYLQMARKKARESYVETELIFALAKTNRLAELEEFINGPNNAHIQQVGDRCYDEKMYDAAKLLYNNVSNFGRLASTLVHLGEYQAAVDGARKANSTRTWKEVCFACVDGKEFRLAQMCGLHIVVHADELEELINYYQDRGYFEELITMLEAALGLERAHMGMFTELAILYSKFKPQKMREHLELFWSRVNIPKVLRAAEQAHLWAELVFLYDKYEEYDNAIITMMNHPTDAWKEGQFKDIITKVANVELYYRAIQFYLEFKPLLLNDLLMVLSPRLDHTRAVNYFSKVKQLPLVKPYLRSVQNHNNKSVNESLNNLFITEEDYQALRTSIDAYDNFDNISLAQRLEKHELIEFRRIAAYLFKGNNRWKQSVELCKKDSLYKDAMQYASESKDTELAEELLQWFLQEEKRECFGACLFTCYDLLRPDVVLETAWRHNIMDFAMPYFIQVMKEYLTKVDKLDASESLRKEEEQATETQPIVYGQPQLMLTAGPSVAVPPQAPFGYGYTAPPYGQPQPGFGYSM</sequence>
<reference key="1">
    <citation type="journal article" date="1994" name="DNA Res.">
        <title>Prediction of the coding sequences of unidentified human genes. I. The coding sequences of 40 new genes (KIAA0001-KIAA0040) deduced by analysis of randomly sampled cDNA clones from human immature myeloid cell line KG-1.</title>
        <authorList>
            <person name="Nomura N."/>
            <person name="Miyajima N."/>
            <person name="Sazuka T."/>
            <person name="Tanaka A."/>
            <person name="Kawarabayasi Y."/>
            <person name="Sato S."/>
            <person name="Nagase T."/>
            <person name="Seki N."/>
            <person name="Ishikawa K."/>
            <person name="Tabata S."/>
        </authorList>
    </citation>
    <scope>NUCLEOTIDE SEQUENCE [LARGE SCALE MRNA] (ISOFORM 1)</scope>
    <source>
        <tissue>Bone marrow</tissue>
    </source>
</reference>
<reference key="2">
    <citation type="journal article" date="2007" name="BMC Genomics">
        <title>The full-ORF clone resource of the German cDNA consortium.</title>
        <authorList>
            <person name="Bechtel S."/>
            <person name="Rosenfelder H."/>
            <person name="Duda A."/>
            <person name="Schmidt C.P."/>
            <person name="Ernst U."/>
            <person name="Wellenreuther R."/>
            <person name="Mehrle A."/>
            <person name="Schuster C."/>
            <person name="Bahr A."/>
            <person name="Bloecker H."/>
            <person name="Heubner D."/>
            <person name="Hoerlein A."/>
            <person name="Michel G."/>
            <person name="Wedler H."/>
            <person name="Koehrer K."/>
            <person name="Ottenwaelder B."/>
            <person name="Poustka A."/>
            <person name="Wiemann S."/>
            <person name="Schupp I."/>
        </authorList>
    </citation>
    <scope>NUCLEOTIDE SEQUENCE [LARGE SCALE MRNA] (ISOFORM 1)</scope>
    <source>
        <tissue>Fetal kidney</tissue>
    </source>
</reference>
<reference key="3">
    <citation type="submission" date="2005-09" db="EMBL/GenBank/DDBJ databases">
        <authorList>
            <person name="Mural R.J."/>
            <person name="Istrail S."/>
            <person name="Sutton G.G."/>
            <person name="Florea L."/>
            <person name="Halpern A.L."/>
            <person name="Mobarry C.M."/>
            <person name="Lippert R."/>
            <person name="Walenz B."/>
            <person name="Shatkay H."/>
            <person name="Dew I."/>
            <person name="Miller J.R."/>
            <person name="Flanigan M.J."/>
            <person name="Edwards N.J."/>
            <person name="Bolanos R."/>
            <person name="Fasulo D."/>
            <person name="Halldorsson B.V."/>
            <person name="Hannenhalli S."/>
            <person name="Turner R."/>
            <person name="Yooseph S."/>
            <person name="Lu F."/>
            <person name="Nusskern D.R."/>
            <person name="Shue B.C."/>
            <person name="Zheng X.H."/>
            <person name="Zhong F."/>
            <person name="Delcher A.L."/>
            <person name="Huson D.H."/>
            <person name="Kravitz S.A."/>
            <person name="Mouchard L."/>
            <person name="Reinert K."/>
            <person name="Remington K.A."/>
            <person name="Clark A.G."/>
            <person name="Waterman M.S."/>
            <person name="Eichler E.E."/>
            <person name="Adams M.D."/>
            <person name="Hunkapiller M.W."/>
            <person name="Myers E.W."/>
            <person name="Venter J.C."/>
        </authorList>
    </citation>
    <scope>NUCLEOTIDE SEQUENCE [LARGE SCALE GENOMIC DNA]</scope>
</reference>
<reference key="4">
    <citation type="journal article" date="2004" name="Genome Res.">
        <title>The status, quality, and expansion of the NIH full-length cDNA project: the Mammalian Gene Collection (MGC).</title>
        <authorList>
            <consortium name="The MGC Project Team"/>
        </authorList>
    </citation>
    <scope>NUCLEOTIDE SEQUENCE [LARGE SCALE MRNA] (ISOFORMS 1 AND 2)</scope>
    <source>
        <tissue>PNS</tissue>
        <tissue>Testis</tissue>
    </source>
</reference>
<reference key="5">
    <citation type="journal article" date="1991" name="Genomics">
        <title>Human clathrin heavy chain (CLTC): partial molecular cloning, expression, and mapping of the gene to human chromosome 17q11-qter.</title>
        <authorList>
            <person name="Dodge G.R."/>
            <person name="Kovalszky I."/>
            <person name="McBride O.W."/>
            <person name="Yi H.F."/>
            <person name="Chu M.-L."/>
            <person name="Saitta B."/>
            <person name="Stokes D.G."/>
            <person name="Iozzo R.V."/>
        </authorList>
    </citation>
    <scope>NUCLEOTIDE SEQUENCE [MRNA] OF 560-864 (ISOFORMS 1/2)</scope>
    <source>
        <tissue>Colon</tissue>
    </source>
</reference>
<reference key="6">
    <citation type="journal article" date="2003" name="Nat. Biotechnol.">
        <title>Exploring proteomes and analyzing protein processing by mass spectrometric identification of sorted N-terminal peptides.</title>
        <authorList>
            <person name="Gevaert K."/>
            <person name="Goethals M."/>
            <person name="Martens L."/>
            <person name="Van Damme J."/>
            <person name="Staes A."/>
            <person name="Thomas G.R."/>
            <person name="Vandekerckhove J."/>
        </authorList>
    </citation>
    <scope>PROTEIN SEQUENCE OF 2-8</scope>
    <source>
        <tissue>Platelet</tissue>
    </source>
</reference>
<reference key="7">
    <citation type="submission" date="2008-02" db="UniProtKB">
        <authorList>
            <person name="Bienvenut W.V."/>
            <person name="Calvo F."/>
            <person name="Matallanas D."/>
            <person name="Cooper W.N."/>
            <person name="Boldt K."/>
            <person name="von Kriegsheim A.F."/>
            <person name="Kolch W."/>
        </authorList>
    </citation>
    <scope>PROTEIN SEQUENCE OF 2-8; 64-78; 87-96; 164-205; 228-245; 270-278; 298-320; 355-382; 469-481; 507-519; 572-610; 626-638; 799-806; 831-852; 855-865; 882-903; 1011-1037; 1074-1101; 1123-1130; 1166-1179; 1183-1204; 1216-1245; 1312-1326; 1398-1406; 1435-1453; 1482-1498; 1502-1508; 1510-1516 AND 1610-1620</scope>
    <scope>CLEAVAGE OF INITIATOR METHIONINE</scope>
    <scope>ACETYLATION AT ALA-2</scope>
    <scope>IDENTIFICATION BY MASS SPECTROMETRY</scope>
    <source>
        <tissue>Cervix carcinoma</tissue>
        <tissue>Hepatoma</tissue>
        <tissue>Mammary carcinoma</tissue>
    </source>
</reference>
<reference key="8">
    <citation type="journal article" date="2001" name="Hum. Mol. Genet.">
        <title>The huntingtin interacting protein HIP1 is a clathrin and alpha-adaptin-binding protein involved in receptor-mediated endocytosis.</title>
        <authorList>
            <person name="Waelter S."/>
            <person name="Scherzinger E."/>
            <person name="Hasenbank R."/>
            <person name="Nordhoff E."/>
            <person name="Lurz R."/>
            <person name="Goehler H."/>
            <person name="Gauss C."/>
            <person name="Sathasivam K."/>
            <person name="Bates G.P."/>
            <person name="Lehrach H."/>
            <person name="Wanker E.E."/>
        </authorList>
    </citation>
    <scope>INTERACTION WITH HIP1</scope>
</reference>
<reference key="9">
    <citation type="journal article" date="2003" name="Nature">
        <title>Proteomic characterization of the human centrosome by protein correlation profiling.</title>
        <authorList>
            <person name="Andersen J.S."/>
            <person name="Wilkinson C.J."/>
            <person name="Mayor T."/>
            <person name="Mortensen P."/>
            <person name="Nigg E.A."/>
            <person name="Mann M."/>
        </authorList>
    </citation>
    <scope>IDENTIFICATION BY MASS SPECTROMETRY</scope>
    <source>
        <tissue>Lymphoblast</tissue>
    </source>
</reference>
<reference key="10">
    <citation type="journal article" date="2005" name="Mol. Cell. Biol.">
        <title>Endosomal transport of ErbB-2: mechanism for nuclear entry of the cell surface receptor.</title>
        <authorList>
            <person name="Giri D.K."/>
            <person name="Ali-Seyed M."/>
            <person name="Li L.Y."/>
            <person name="Lee D.F."/>
            <person name="Ling P."/>
            <person name="Bartholomeusz G."/>
            <person name="Wang S.C."/>
            <person name="Hung M.C."/>
        </authorList>
    </citation>
    <scope>INTERACTION WITH ERBB2</scope>
</reference>
<reference key="11">
    <citation type="journal article" date="2005" name="Nature">
        <title>Clathrin is required for the function of the mitotic spindle.</title>
        <authorList>
            <person name="Royle S.J."/>
            <person name="Bright N.A."/>
            <person name="Lagnado L."/>
        </authorList>
    </citation>
    <scope>FUNCTION</scope>
    <scope>SUBCELLULAR LOCATION</scope>
</reference>
<reference key="12">
    <citation type="journal article" date="2006" name="J. Cell Sci.">
        <title>Trimerisation is important for the function of clathrin at the mitotic spindle.</title>
        <authorList>
            <person name="Royle S.J."/>
            <person name="Lagnado L."/>
        </authorList>
    </citation>
    <scope>FUNCTION</scope>
    <scope>SUBUNIT</scope>
    <scope>SUBCELLULAR LOCATION</scope>
</reference>
<reference key="13">
    <citation type="journal article" date="2006" name="J. Proteome Res.">
        <title>Proteomic and bioinformatic characterization of the biogenesis and function of melanosomes.</title>
        <authorList>
            <person name="Chi A."/>
            <person name="Valencia J.C."/>
            <person name="Hu Z.-Z."/>
            <person name="Watabe H."/>
            <person name="Yamaguchi H."/>
            <person name="Mangini N.J."/>
            <person name="Huang H."/>
            <person name="Canfield V.A."/>
            <person name="Cheng K.C."/>
            <person name="Yang F."/>
            <person name="Abe R."/>
            <person name="Yamagishi S."/>
            <person name="Shabanowitz J."/>
            <person name="Hearing V.J."/>
            <person name="Wu C."/>
            <person name="Appella E."/>
            <person name="Hunt D.F."/>
        </authorList>
    </citation>
    <scope>SUBCELLULAR LOCATION [LARGE SCALE ANALYSIS]</scope>
    <source>
        <tissue>Melanoma</tissue>
    </source>
</reference>
<reference key="14">
    <citation type="journal article" date="2008" name="Biochemistry">
        <title>FKBP36 forms complexes with clathrin and Hsp72 in spermatocytes.</title>
        <authorList>
            <person name="Jarczowski F."/>
            <person name="Fischer G."/>
            <person name="Edlich F."/>
        </authorList>
    </citation>
    <scope>INTERACTION WITH FKBP6</scope>
</reference>
<reference key="15">
    <citation type="journal article" date="2008" name="Mol. Cell">
        <title>Kinase-selective enrichment enables quantitative phosphoproteomics of the kinome across the cell cycle.</title>
        <authorList>
            <person name="Daub H."/>
            <person name="Olsen J.V."/>
            <person name="Bairlein M."/>
            <person name="Gnad F."/>
            <person name="Oppermann F.S."/>
            <person name="Korner R."/>
            <person name="Greff Z."/>
            <person name="Keri G."/>
            <person name="Stemmann O."/>
            <person name="Mann M."/>
        </authorList>
    </citation>
    <scope>IDENTIFICATION BY MASS SPECTROMETRY [LARGE SCALE ANALYSIS]</scope>
    <source>
        <tissue>Cervix carcinoma</tissue>
    </source>
</reference>
<reference key="16">
    <citation type="journal article" date="2008" name="Proc. Natl. Acad. Sci. U.S.A.">
        <title>A quantitative atlas of mitotic phosphorylation.</title>
        <authorList>
            <person name="Dephoure N."/>
            <person name="Zhou C."/>
            <person name="Villen J."/>
            <person name="Beausoleil S.A."/>
            <person name="Bakalarski C.E."/>
            <person name="Elledge S.J."/>
            <person name="Gygi S.P."/>
        </authorList>
    </citation>
    <scope>PHOSPHORYLATION [LARGE SCALE ANALYSIS] AT THR-394</scope>
    <scope>IDENTIFICATION BY MASS SPECTROMETRY [LARGE SCALE ANALYSIS]</scope>
    <source>
        <tissue>Cervix carcinoma</tissue>
    </source>
</reference>
<reference key="17">
    <citation type="journal article" date="2009" name="Mol. Cell. Proteomics">
        <title>Large-scale proteomics analysis of the human kinome.</title>
        <authorList>
            <person name="Oppermann F.S."/>
            <person name="Gnad F."/>
            <person name="Olsen J.V."/>
            <person name="Hornberger R."/>
            <person name="Greff Z."/>
            <person name="Keri G."/>
            <person name="Mann M."/>
            <person name="Daub H."/>
        </authorList>
    </citation>
    <scope>PHOSPHORYLATION [LARGE SCALE ANALYSIS] AT SER-1494</scope>
    <scope>IDENTIFICATION BY MASS SPECTROMETRY [LARGE SCALE ANALYSIS]</scope>
</reference>
<reference key="18">
    <citation type="journal article" date="2009" name="Sci. Signal.">
        <title>Quantitative phosphoproteomic analysis of T cell receptor signaling reveals system-wide modulation of protein-protein interactions.</title>
        <authorList>
            <person name="Mayya V."/>
            <person name="Lundgren D.H."/>
            <person name="Hwang S.-I."/>
            <person name="Rezaul K."/>
            <person name="Wu L."/>
            <person name="Eng J.K."/>
            <person name="Rodionov V."/>
            <person name="Han D.K."/>
        </authorList>
    </citation>
    <scope>PHOSPHORYLATION [LARGE SCALE ANALYSIS] AT TYR-634 AND TYR-1477</scope>
    <scope>IDENTIFICATION BY MASS SPECTROMETRY [LARGE SCALE ANALYSIS]</scope>
    <source>
        <tissue>Leukemic T-cell</tissue>
    </source>
</reference>
<reference key="19">
    <citation type="journal article" date="2009" name="Science">
        <title>Lysine acetylation targets protein complexes and co-regulates major cellular functions.</title>
        <authorList>
            <person name="Choudhary C."/>
            <person name="Kumar C."/>
            <person name="Gnad F."/>
            <person name="Nielsen M.L."/>
            <person name="Rehman M."/>
            <person name="Walther T.C."/>
            <person name="Olsen J.V."/>
            <person name="Mann M."/>
        </authorList>
    </citation>
    <scope>ACETYLATION [LARGE SCALE ANALYSIS] AT LYS-856; LYS-1441 AND LYS-1501</scope>
    <scope>IDENTIFICATION BY MASS SPECTROMETRY [LARGE SCALE ANALYSIS]</scope>
</reference>
<reference key="20">
    <citation type="journal article" date="2010" name="Nat. Cell Biol.">
        <title>Plasma membrane contributes to the formation of pre-autophagosomal structures.</title>
        <authorList>
            <person name="Ravikumar B."/>
            <person name="Moreau K."/>
            <person name="Jahreiss L."/>
            <person name="Puri C."/>
            <person name="Rubinsztein D.C."/>
        </authorList>
    </citation>
    <scope>FUNCTION</scope>
    <scope>INTERACTION WITH ATG16L1</scope>
</reference>
<reference key="21">
    <citation type="journal article" date="2010" name="Sci. Signal.">
        <title>Quantitative phosphoproteomics reveals widespread full phosphorylation site occupancy during mitosis.</title>
        <authorList>
            <person name="Olsen J.V."/>
            <person name="Vermeulen M."/>
            <person name="Santamaria A."/>
            <person name="Kumar C."/>
            <person name="Miller M.L."/>
            <person name="Jensen L.J."/>
            <person name="Gnad F."/>
            <person name="Cox J."/>
            <person name="Jensen T.S."/>
            <person name="Nigg E.A."/>
            <person name="Brunak S."/>
            <person name="Mann M."/>
        </authorList>
    </citation>
    <scope>IDENTIFICATION BY MASS SPECTROMETRY [LARGE SCALE ANALYSIS]</scope>
    <source>
        <tissue>Cervix carcinoma</tissue>
    </source>
</reference>
<reference key="22">
    <citation type="journal article" date="2011" name="BMC Syst. Biol.">
        <title>Initial characterization of the human central proteome.</title>
        <authorList>
            <person name="Burkard T.R."/>
            <person name="Planyavsky M."/>
            <person name="Kaupe I."/>
            <person name="Breitwieser F.P."/>
            <person name="Buerckstuemmer T."/>
            <person name="Bennett K.L."/>
            <person name="Superti-Furga G."/>
            <person name="Colinge J."/>
        </authorList>
    </citation>
    <scope>IDENTIFICATION BY MASS SPECTROMETRY [LARGE SCALE ANALYSIS]</scope>
</reference>
<reference key="23">
    <citation type="journal article" date="2011" name="EMBO J.">
        <title>A TACC3/ch-TOG/clathrin complex stabilises kinetochore fibres by inter-microtubule bridging.</title>
        <authorList>
            <person name="Booth D.G."/>
            <person name="Hood F.E."/>
            <person name="Prior I.A."/>
            <person name="Royle S.J."/>
        </authorList>
    </citation>
    <scope>SUBCELLULAR LOCATION</scope>
    <scope>SUBUNIT</scope>
</reference>
<reference key="24">
    <citation type="journal article" date="2011" name="J. Biol. Chem.">
        <title>Raftlin is involved in the nucleocapture complex to induce poly(I:C)-mediated TLR3 activation.</title>
        <authorList>
            <person name="Watanabe A."/>
            <person name="Tatematsu M."/>
            <person name="Saeki K."/>
            <person name="Shibata S."/>
            <person name="Shime H."/>
            <person name="Yoshimura A."/>
            <person name="Obuse C."/>
            <person name="Seya T."/>
            <person name="Matsumoto M."/>
        </authorList>
    </citation>
    <scope>INTERACTION WITH RFTN1</scope>
</reference>
<reference key="25">
    <citation type="journal article" date="2012" name="Mol. Cell. Proteomics">
        <title>Comparative large-scale characterisation of plant vs. mammal proteins reveals similar and idiosyncratic N-alpha acetylation features.</title>
        <authorList>
            <person name="Bienvenut W.V."/>
            <person name="Sumpton D."/>
            <person name="Martinez A."/>
            <person name="Lilla S."/>
            <person name="Espagne C."/>
            <person name="Meinnel T."/>
            <person name="Giglione C."/>
        </authorList>
    </citation>
    <scope>ACETYLATION [LARGE SCALE ANALYSIS] AT ALA-2</scope>
    <scope>CLEAVAGE OF INITIATOR METHIONINE [LARGE SCALE ANALYSIS]</scope>
    <scope>IDENTIFICATION BY MASS SPECTROMETRY [LARGE SCALE ANALYSIS]</scope>
</reference>
<reference key="26">
    <citation type="journal article" date="2012" name="Proc. Natl. Acad. Sci. U.S.A.">
        <title>N-terminal acetylome analyses and functional insights of the N-terminal acetyltransferase NatB.</title>
        <authorList>
            <person name="Van Damme P."/>
            <person name="Lasa M."/>
            <person name="Polevoda B."/>
            <person name="Gazquez C."/>
            <person name="Elosegui-Artola A."/>
            <person name="Kim D.S."/>
            <person name="De Juan-Pardo E."/>
            <person name="Demeyer K."/>
            <person name="Hole K."/>
            <person name="Larrea E."/>
            <person name="Timmerman E."/>
            <person name="Prieto J."/>
            <person name="Arnesen T."/>
            <person name="Sherman F."/>
            <person name="Gevaert K."/>
            <person name="Aldabe R."/>
        </authorList>
    </citation>
    <scope>ACETYLATION [LARGE SCALE ANALYSIS] AT ALA-2</scope>
    <scope>CLEAVAGE OF INITIATOR METHIONINE [LARGE SCALE ANALYSIS]</scope>
    <scope>IDENTIFICATION BY MASS SPECTROMETRY [LARGE SCALE ANALYSIS]</scope>
</reference>
<reference key="27">
    <citation type="journal article" date="2013" name="J. Cell Biol.">
        <title>Coordination of adjacent domains mediates TACC3-ch-TOG-clathrin assembly and mitotic spindle binding.</title>
        <authorList>
            <person name="Hood F.E."/>
            <person name="Williams S.J."/>
            <person name="Burgess S.G."/>
            <person name="Richards M.W."/>
            <person name="Roth D."/>
            <person name="Straube A."/>
            <person name="Pfuhl M."/>
            <person name="Bayliss R."/>
            <person name="Royle S.J."/>
        </authorList>
    </citation>
    <scope>INTERACTION WITH TACC3</scope>
    <scope>SUBCELLULAR LOCATION</scope>
    <scope>MUTAGENESIS OF PRO-65; SER-67; THR-87; GLN-89; LYS-96; LYS-98 AND 480-LYS--VAL-484</scope>
</reference>
<reference key="28">
    <citation type="journal article" date="2013" name="J. Cell Sci.">
        <title>Specific removal of TACC3-ch-TOG-clathrin at metaphase deregulates kinetochore fiber tension.</title>
        <authorList>
            <person name="Cheeseman L.P."/>
            <person name="Harry E.F."/>
            <person name="McAinsh A.D."/>
            <person name="Prior I.A."/>
            <person name="Royle S.J."/>
        </authorList>
    </citation>
    <scope>FUNCTION OF THE TACC3/CH-TOG/CLATHRIN COMPLEX</scope>
</reference>
<reference key="29">
    <citation type="journal article" date="2013" name="J. Proteome Res.">
        <title>Toward a comprehensive characterization of a human cancer cell phosphoproteome.</title>
        <authorList>
            <person name="Zhou H."/>
            <person name="Di Palma S."/>
            <person name="Preisinger C."/>
            <person name="Peng M."/>
            <person name="Polat A.N."/>
            <person name="Heck A.J."/>
            <person name="Mohammed S."/>
        </authorList>
    </citation>
    <scope>PHOSPHORYLATION [LARGE SCALE ANALYSIS] AT SER-67; THR-394; SER-1229 AND SER-1494</scope>
    <scope>IDENTIFICATION BY MASS SPECTROMETRY [LARGE SCALE ANALYSIS]</scope>
    <source>
        <tissue>Cervix carcinoma</tissue>
        <tissue>Erythroleukemia</tissue>
    </source>
</reference>
<reference key="30">
    <citation type="journal article" date="2014" name="J. Proteomics">
        <title>An enzyme assisted RP-RPLC approach for in-depth analysis of human liver phosphoproteome.</title>
        <authorList>
            <person name="Bian Y."/>
            <person name="Song C."/>
            <person name="Cheng K."/>
            <person name="Dong M."/>
            <person name="Wang F."/>
            <person name="Huang J."/>
            <person name="Sun D."/>
            <person name="Wang L."/>
            <person name="Ye M."/>
            <person name="Zou H."/>
        </authorList>
    </citation>
    <scope>PHOSPHORYLATION [LARGE SCALE ANALYSIS] AT THR-394 AND SER-1494</scope>
    <scope>IDENTIFICATION BY MASS SPECTROMETRY [LARGE SCALE ANALYSIS]</scope>
    <source>
        <tissue>Liver</tissue>
    </source>
</reference>
<reference key="31">
    <citation type="journal article" date="2014" name="Mol. Cell. Neurosci.">
        <title>Lysosome size, motility and stress response regulated by fronto-temporal dementia modifier TMEM106B.</title>
        <authorList>
            <person name="Stagi M."/>
            <person name="Klein Z.A."/>
            <person name="Gould T.J."/>
            <person name="Bewersdorf J."/>
            <person name="Strittmatter S.M."/>
        </authorList>
    </citation>
    <scope>INTERACTION WITH TMEM106B</scope>
</reference>
<reference key="32">
    <citation type="journal article" date="2015" name="Biol. Open">
        <title>TACC3-ch-TOG track the growing tips of microtubules independently of clathrin and Aurora-A phosphorylation.</title>
        <authorList>
            <person name="Gutierrez-Caballero C."/>
            <person name="Burgess S.G."/>
            <person name="Bayliss R."/>
            <person name="Royle S.J."/>
        </authorList>
    </citation>
    <scope>SUBCELLULAR LOCATION</scope>
</reference>
<reference key="33">
    <citation type="journal article" date="2015" name="Proteomics">
        <title>N-terminome analysis of the human mitochondrial proteome.</title>
        <authorList>
            <person name="Vaca Jacome A.S."/>
            <person name="Rabilloud T."/>
            <person name="Schaeffer-Reiss C."/>
            <person name="Rompais M."/>
            <person name="Ayoub D."/>
            <person name="Lane L."/>
            <person name="Bairoch A."/>
            <person name="Van Dorsselaer A."/>
            <person name="Carapito C."/>
        </authorList>
    </citation>
    <scope>ACETYLATION [LARGE SCALE ANALYSIS] AT ALA-2</scope>
    <scope>CLEAVAGE OF INITIATOR METHIONINE [LARGE SCALE ANALYSIS]</scope>
    <scope>IDENTIFICATION BY MASS SPECTROMETRY [LARGE SCALE ANALYSIS]</scope>
</reference>
<reference key="34">
    <citation type="journal article" date="2016" name="J. Immunol.">
        <title>Raftlin controls lipopolysaccharide-induced TLR4 internalization and TICAM-1 signaling in a cell type-specific manner.</title>
        <authorList>
            <person name="Tatematsu M."/>
            <person name="Yoshida R."/>
            <person name="Morioka Y."/>
            <person name="Ishii N."/>
            <person name="Funami K."/>
            <person name="Watanabe A."/>
            <person name="Saeki K."/>
            <person name="Seya T."/>
            <person name="Matsumoto M."/>
        </authorList>
    </citation>
    <scope>INTERACTION WITH RFTN1</scope>
    <scope>IDENTIFICATION BY MASS SPECTROMETRY</scope>
</reference>
<reference key="35">
    <citation type="journal article" date="2011" name="Cell">
        <title>Role of the clathrin terminal domain in regulating coated pit dynamics revealed by small molecule inhibition.</title>
        <authorList>
            <person name="von Kleist L."/>
            <person name="Stahlschmidt W."/>
            <person name="Bulut H."/>
            <person name="Gromova K."/>
            <person name="Puchkov D."/>
            <person name="Robertson M.J."/>
            <person name="MacGregor K.A."/>
            <person name="Tomilin N."/>
            <person name="Pechstein A."/>
            <person name="Chau N."/>
            <person name="Chircop M."/>
            <person name="Sakoff J."/>
            <person name="von Kries J.P."/>
            <person name="Saenger W."/>
            <person name="Krausslich H.G."/>
            <person name="Shupliakov O."/>
            <person name="Robinson P.J."/>
            <person name="McCluskey A."/>
            <person name="Haucke V."/>
        </authorList>
    </citation>
    <scope>X-RAY CRYSTALLOGRAPHY (1.69 ANGSTROMS) OF 1-364 IN COMPLEX WITH INHIBITORS</scope>
    <scope>WD40-LIKE REPEATS</scope>
</reference>
<reference key="36">
    <citation type="journal article" date="2016" name="PLoS ONE">
        <title>USP2-45 is a circadian clock output effector regulating calcium absorption at the post-translational level.</title>
        <authorList>
            <person name="Pouly D."/>
            <person name="Chenaux S."/>
            <person name="Martin V."/>
            <person name="Babis M."/>
            <person name="Koch R."/>
            <person name="Nagoshi E."/>
            <person name="Katanaev V.L."/>
            <person name="Gachon F."/>
            <person name="Staub O."/>
        </authorList>
    </citation>
    <scope>INTERACTION WITH USP2</scope>
</reference>
<reference key="37">
    <citation type="journal article" date="2018" name="Proc. Natl. Acad. Sci. U.S.A.">
        <title>LRRK2 phosphorylation of auxilin mediates synaptic defects in dopaminergic neurons from patients with Parkinson's disease.</title>
        <authorList>
            <person name="Nguyen M."/>
            <person name="Krainc D."/>
        </authorList>
    </citation>
    <scope>INTERACTION WITH DNAJC6</scope>
</reference>
<reference key="38">
    <citation type="journal article" date="2016" name="Am. J. Med. Genet. A">
        <title>CLTC as a clinically novel gene associated with multiple malformations and developmental delay.</title>
        <authorList>
            <person name="DeMari J."/>
            <person name="Mroske C."/>
            <person name="Tang S."/>
            <person name="Nimeh J."/>
            <person name="Miller R."/>
            <person name="Lebel R.R."/>
        </authorList>
    </citation>
    <scope>INVOLVEMENT IN MRD56</scope>
</reference>
<reference key="39">
    <citation type="journal article" date="2017" name="Am. J. Hum. Genet.">
        <title>High rate of recurrent de novo mutations in developmental and epileptic encephalopathies.</title>
        <authorList>
            <consortium name="Deciphering Developmental Disorders Study"/>
            <person name="Hamdan F.F."/>
            <person name="Myers C.T."/>
            <person name="Cossette P."/>
            <person name="Lemay P."/>
            <person name="Spiegelman D."/>
            <person name="Laporte A.D."/>
            <person name="Nassif C."/>
            <person name="Diallo O."/>
            <person name="Monlong J."/>
            <person name="Cadieux-Dion M."/>
            <person name="Dobrzeniecka S."/>
            <person name="Meloche C."/>
            <person name="Retterer K."/>
            <person name="Cho M.T."/>
            <person name="Rosenfeld J.A."/>
            <person name="Bi W."/>
            <person name="Massicotte C."/>
            <person name="Miguet M."/>
            <person name="Brunga L."/>
            <person name="Regan B.M."/>
            <person name="Mo K."/>
            <person name="Tam C."/>
            <person name="Schneider A."/>
            <person name="Hollingsworth G."/>
            <person name="FitzPatrick D.R."/>
            <person name="Donaldson A."/>
            <person name="Canham N."/>
            <person name="Blair E."/>
            <person name="Kerr B."/>
            <person name="Fry A.E."/>
            <person name="Thomas R.H."/>
            <person name="Shelagh J."/>
            <person name="Hurst J.A."/>
            <person name="Brittain H."/>
            <person name="Blyth M."/>
            <person name="Lebel R.R."/>
            <person name="Gerkes E.H."/>
            <person name="Davis-Keppen L."/>
            <person name="Stein Q."/>
            <person name="Chung W.K."/>
            <person name="Dorison S.J."/>
            <person name="Benke P.J."/>
            <person name="Fassi E."/>
            <person name="Corsten-Janssen N."/>
            <person name="Kamsteeg E.J."/>
            <person name="Mau-Them F.T."/>
            <person name="Bruel A.L."/>
            <person name="Verloes A."/>
            <person name="Ounap K."/>
            <person name="Wojcik M.H."/>
            <person name="Albert D.V.F."/>
            <person name="Venkateswaran S."/>
            <person name="Ware T."/>
            <person name="Jones D."/>
            <person name="Liu Y.C."/>
            <person name="Mohammad S.S."/>
            <person name="Bizargity P."/>
            <person name="Bacino C.A."/>
            <person name="Leuzzi V."/>
            <person name="Martinelli S."/>
            <person name="Dallapiccola B."/>
            <person name="Tartaglia M."/>
            <person name="Blumkin L."/>
            <person name="Wierenga K.J."/>
            <person name="Purcarin G."/>
            <person name="O'Byrne J.J."/>
            <person name="Stockler S."/>
            <person name="Lehman A."/>
            <person name="Keren B."/>
            <person name="Nougues M.C."/>
            <person name="Mignot C."/>
            <person name="Auvin S."/>
            <person name="Nava C."/>
            <person name="Hiatt S.M."/>
            <person name="Bebin M."/>
            <person name="Shao Y."/>
            <person name="Scaglia F."/>
            <person name="Lalani S.R."/>
            <person name="Frye R.E."/>
            <person name="Jarjour I.T."/>
            <person name="Jacques S."/>
            <person name="Boucher R.M."/>
            <person name="Riou E."/>
            <person name="Srour M."/>
            <person name="Carmant L."/>
            <person name="Lortie A."/>
            <person name="Major P."/>
            <person name="Diadori P."/>
            <person name="Dubeau F."/>
            <person name="D'Anjou G."/>
            <person name="Bourque G."/>
            <person name="Berkovic S.F."/>
            <person name="Sadleir L.G."/>
            <person name="Campeau P.M."/>
            <person name="Kibar Z."/>
            <person name="Lafreniere R.G."/>
            <person name="Girard S.L."/>
            <person name="Mercimek-Mahmutoglu S."/>
            <person name="Boelman C."/>
            <person name="Rouleau G.A."/>
            <person name="Scheffer I.E."/>
            <person name="Mefford H.C."/>
            <person name="Andrade D.M."/>
            <person name="Rossignol E."/>
            <person name="Minassian B.A."/>
            <person name="Michaud J.L."/>
        </authorList>
    </citation>
    <scope>INVOLVEMENT IN MRD56</scope>
    <scope>VARIANTS MRD56 554-MET--TYR-556 DEL; LEU-890; PRO-1047; ARG-1108; 1199-GLN--MET-1675 DEL; ASP-1207 DEL; 1555-GLN--MET-1675 DEL AND 1556-TRP--MET-1675 DEL</scope>
</reference>
<proteinExistence type="evidence at protein level"/>
<organism>
    <name type="scientific">Homo sapiens</name>
    <name type="common">Human</name>
    <dbReference type="NCBI Taxonomy" id="9606"/>
    <lineage>
        <taxon>Eukaryota</taxon>
        <taxon>Metazoa</taxon>
        <taxon>Chordata</taxon>
        <taxon>Craniata</taxon>
        <taxon>Vertebrata</taxon>
        <taxon>Euteleostomi</taxon>
        <taxon>Mammalia</taxon>
        <taxon>Eutheria</taxon>
        <taxon>Euarchontoglires</taxon>
        <taxon>Primates</taxon>
        <taxon>Haplorrhini</taxon>
        <taxon>Catarrhini</taxon>
        <taxon>Hominidae</taxon>
        <taxon>Homo</taxon>
    </lineage>
</organism>
<protein>
    <recommendedName>
        <fullName evidence="28 29">Clathrin heavy chain 1</fullName>
    </recommendedName>
    <alternativeName>
        <fullName>Clathrin heavy chain on chromosome 17</fullName>
        <shortName>CLH-17</shortName>
    </alternativeName>
</protein>
<comment type="function">
    <text evidence="2 8 10 13 15 17">Clathrin is the major protein of the polyhedral coat of coated pits and vesicles. Two different adapter protein complexes link the clathrin lattice either to the plasma membrane or to the trans-Golgi network. Acts as a component of the TACC3/ch-TOG/clathrin complex proposed to contribute to stabilization of kinetochore fibers of the mitotic spindle by acting as inter-microtubule bridge (PubMed:15858577, PubMed:16968737, PubMed:21297582). The TACC3/ch-TOG/clathrin complex is required for the maintenance of kinetochore fiber tension (PubMed:23532825). Plays a role in early autophagosome formation (PubMed:20639872). Interaction with DNAJC6 mediates the recruitment of HSPA8 to the clathrin lattice and creates local destabilization of the lattice promoting uncoating (By similarity).</text>
</comment>
<comment type="subunit">
    <text evidence="2 3 6 9 10 12 13 14 15 19 21 23 25">Clathrin triskelions, composed of 3 heavy chains and 3 light chains, are the basic subunits of the clathrin coat (PubMed:16968737). In the presence of light chains, hub assembly is influenced by both the pH and the concentration of calcium. Interacts with HIP1 (PubMed:11532990). Interacts with DENND1A, DENND1B and DENND1C (By similarity). May interact with OCRL (By similarity). Interacts with ERBB2 (PubMed:16314522). Interacts with FKBP6 (PubMed:18529014). Interacts with CKAP5 and TACC3 forming the TACC3/ch-TOG/clathrin complex located at spindle inter-microtubules bridges; the complex implicates clathrin triskelions; TACC3 and CLTC are proposed to form a composite microtubule interaction surface (PubMed:21297582). Interacts with ATG16L1 (via N-terminus) (PubMed:20639872). Interacts with RFTN1; the interaction occurs in response to pathogens (PubMed:21266579, PubMed:27022195). Interacts with USP2 isoform 4 (PubMed:26756164). Interacts with TMEM106B (via N-terminus) (PubMed:25066864). Interacts with DNAJC6; this interaction produces a local change in heavy-chain contacts, creating a detectable global distortion of the clathrin coat and leads to the recruitment of HSPA8 (PubMed:29735704).</text>
</comment>
<comment type="interaction">
    <interactant intactId="EBI-354967">
        <id>Q00610</id>
    </interactant>
    <interactant intactId="EBI-714559">
        <id>P32121</id>
        <label>ARRB2</label>
    </interactant>
    <organismsDiffer>false</organismsDiffer>
    <experiments>6</experiments>
</comment>
<comment type="interaction">
    <interactant intactId="EBI-354967">
        <id>Q00610</id>
    </interactant>
    <interactant intactId="EBI-1171169">
        <id>P09496</id>
        <label>CLTA</label>
    </interactant>
    <organismsDiffer>false</organismsDiffer>
    <experiments>4</experiments>
</comment>
<comment type="interaction">
    <interactant intactId="EBI-354967">
        <id>Q00610</id>
    </interactant>
    <interactant intactId="EBI-748280">
        <id>Q15398</id>
        <label>DLGAP5</label>
    </interactant>
    <organismsDiffer>false</organismsDiffer>
    <experiments>4</experiments>
</comment>
<comment type="interaction">
    <interactant intactId="EBI-354967">
        <id>Q00610</id>
    </interactant>
    <interactant intactId="EBI-298355">
        <id>P10242</id>
        <label>MYB</label>
    </interactant>
    <organismsDiffer>false</organismsDiffer>
    <experiments>4</experiments>
</comment>
<comment type="interaction">
    <interactant intactId="EBI-354967">
        <id>Q00610</id>
    </interactant>
    <interactant intactId="EBI-6148898">
        <id>Q01968</id>
        <label>OCRL</label>
    </interactant>
    <organismsDiffer>false</organismsDiffer>
    <experiments>10</experiments>
</comment>
<comment type="interaction">
    <interactant intactId="EBI-354967">
        <id>Q00610</id>
    </interactant>
    <interactant intactId="EBI-714785">
        <id>Q9H8K7</id>
        <label>PAAT</label>
    </interactant>
    <organismsDiffer>false</organismsDiffer>
    <experiments>5</experiments>
</comment>
<comment type="interaction">
    <interactant intactId="EBI-354967">
        <id>Q00610</id>
    </interactant>
    <interactant intactId="EBI-603457">
        <id>Q07912</id>
        <label>TNK2</label>
    </interactant>
    <organismsDiffer>false</organismsDiffer>
    <experiments>2</experiments>
</comment>
<comment type="interaction">
    <interactant intactId="EBI-354967">
        <id>Q00610</id>
    </interactant>
    <interactant intactId="EBI-712991">
        <id>O75674</id>
        <label>TOM1L1</label>
    </interactant>
    <organismsDiffer>false</organismsDiffer>
    <experiments>4</experiments>
</comment>
<comment type="interaction">
    <interactant intactId="EBI-354967">
        <id>Q00610</id>
    </interactant>
    <interactant intactId="EBI-38815211">
        <id>Q306W6</id>
    </interactant>
    <organismsDiffer>true</organismsDiffer>
    <experiments>4</experiments>
</comment>
<comment type="interaction">
    <interactant intactId="EBI-354967">
        <id>Q00610</id>
    </interactant>
    <interactant intactId="EBI-38259300">
        <id>Q306W8</id>
    </interactant>
    <organismsDiffer>true</organismsDiffer>
    <experiments>2</experiments>
</comment>
<comment type="subcellular location">
    <subcellularLocation>
        <location evidence="11">Cytoplasmic vesicle membrane</location>
        <topology evidence="11">Peripheral membrane protein</topology>
        <orientation evidence="11">Cytoplasmic side</orientation>
    </subcellularLocation>
    <subcellularLocation>
        <location evidence="11">Membrane</location>
        <location evidence="11">Coated pit</location>
        <topology evidence="11">Peripheral membrane protein</topology>
        <orientation evidence="11">Cytoplasmic side</orientation>
    </subcellularLocation>
    <subcellularLocation>
        <location evidence="11">Melanosome</location>
    </subcellularLocation>
    <subcellularLocation>
        <location evidence="8 10 18">Cytoplasm</location>
        <location evidence="8 10 18">Cytoskeleton</location>
        <location evidence="8 10 18">Spindle</location>
    </subcellularLocation>
    <text evidence="20">Cytoplasmic face of coated pits and vesicles. Identified by mass spectrometry in melanosome fractions from stage I to stage IV. In complex with TACC3 and CKAP5 (forming the TACC3/ch-TOG/clathrin complex) localized to inter-microtubule bridges in mitotic spindles.</text>
</comment>
<comment type="alternative products">
    <event type="alternative splicing"/>
    <isoform>
        <id>Q00610-1</id>
        <name>1</name>
        <sequence type="displayed"/>
    </isoform>
    <isoform>
        <id>Q00610-2</id>
        <name>2</name>
        <sequence type="described" ref="VSP_011570 VSP_011571"/>
    </isoform>
</comment>
<comment type="domain">
    <text>The N-terminal seven-bladed beta-propeller is formed by WD40-like repeats, and projects inward from the polyhedral outer clathrin coat. It constitutes a major protein-protein interaction node.</text>
</comment>
<comment type="disease" evidence="22 24">
    <disease id="DI-05186">
        <name>Intellectual developmental disorder, autosomal dominant 56</name>
        <acronym>MRD56</acronym>
        <description>A form of intellectual disability, a disorder characterized by significantly below average general intellectual functioning associated with impairments in adaptive behavior and manifested during the developmental period.</description>
        <dbReference type="MIM" id="617854"/>
    </disease>
    <text>The disease is caused by variants affecting the gene represented in this entry.</text>
</comment>
<comment type="similarity">
    <text evidence="30">Belongs to the clathrin heavy chain family.</text>
</comment>
<comment type="sequence caution" evidence="30">
    <conflict type="erroneous initiation">
        <sequence resource="EMBL-CDS" id="BAA04801"/>
    </conflict>
</comment>
<comment type="online information" name="Atlas of Genetics and Cytogenetics in Oncology and Haematology">
    <link uri="https://atlasgeneticsoncology.org/gene/360/CLTC"/>
</comment>
<comment type="online information" name="Wikipedia">
    <link uri="https://en.wikipedia.org/wiki/Clathrin"/>
    <text>Clathrin entry</text>
</comment>
<evidence type="ECO:0000250" key="1"/>
<evidence type="ECO:0000250" key="2">
    <source>
        <dbReference type="UniProtKB" id="P49951"/>
    </source>
</evidence>
<evidence type="ECO:0000250" key="3">
    <source>
        <dbReference type="UniProtKB" id="Q68FD5"/>
    </source>
</evidence>
<evidence type="ECO:0000255" key="4"/>
<evidence type="ECO:0000255" key="5">
    <source>
        <dbReference type="PROSITE-ProRule" id="PRU01006"/>
    </source>
</evidence>
<evidence type="ECO:0000269" key="6">
    <source>
    </source>
</evidence>
<evidence type="ECO:0000269" key="7">
    <source>
    </source>
</evidence>
<evidence type="ECO:0000269" key="8">
    <source>
    </source>
</evidence>
<evidence type="ECO:0000269" key="9">
    <source>
    </source>
</evidence>
<evidence type="ECO:0000269" key="10">
    <source>
    </source>
</evidence>
<evidence type="ECO:0000269" key="11">
    <source>
    </source>
</evidence>
<evidence type="ECO:0000269" key="12">
    <source>
    </source>
</evidence>
<evidence type="ECO:0000269" key="13">
    <source>
    </source>
</evidence>
<evidence type="ECO:0000269" key="14">
    <source>
    </source>
</evidence>
<evidence type="ECO:0000269" key="15">
    <source>
    </source>
</evidence>
<evidence type="ECO:0000269" key="16">
    <source>
    </source>
</evidence>
<evidence type="ECO:0000269" key="17">
    <source>
    </source>
</evidence>
<evidence type="ECO:0000269" key="18">
    <source>
    </source>
</evidence>
<evidence type="ECO:0000269" key="19">
    <source>
    </source>
</evidence>
<evidence type="ECO:0000269" key="20">
    <source>
    </source>
</evidence>
<evidence type="ECO:0000269" key="21">
    <source>
    </source>
</evidence>
<evidence type="ECO:0000269" key="22">
    <source>
    </source>
</evidence>
<evidence type="ECO:0000269" key="23">
    <source>
    </source>
</evidence>
<evidence type="ECO:0000269" key="24">
    <source>
    </source>
</evidence>
<evidence type="ECO:0000269" key="25">
    <source>
    </source>
</evidence>
<evidence type="ECO:0000269" key="26">
    <source ref="7"/>
</evidence>
<evidence type="ECO:0000303" key="27">
    <source>
    </source>
</evidence>
<evidence type="ECO:0000303" key="28">
    <source>
    </source>
</evidence>
<evidence type="ECO:0000303" key="29">
    <source>
    </source>
</evidence>
<evidence type="ECO:0000305" key="30"/>
<evidence type="ECO:0000312" key="31">
    <source>
        <dbReference type="HGNC" id="HGNC:2092"/>
    </source>
</evidence>
<evidence type="ECO:0007744" key="32">
    <source>
    </source>
</evidence>
<evidence type="ECO:0007744" key="33">
    <source>
    </source>
</evidence>
<evidence type="ECO:0007744" key="34">
    <source>
    </source>
</evidence>
<evidence type="ECO:0007744" key="35">
    <source>
    </source>
</evidence>
<evidence type="ECO:0007744" key="36">
    <source>
    </source>
</evidence>
<evidence type="ECO:0007744" key="37">
    <source>
    </source>
</evidence>
<evidence type="ECO:0007744" key="38">
    <source>
    </source>
</evidence>
<evidence type="ECO:0007744" key="39">
    <source>
    </source>
</evidence>
<evidence type="ECO:0007744" key="40">
    <source>
    </source>
</evidence>
<evidence type="ECO:0007829" key="41">
    <source>
        <dbReference type="PDB" id="6E4L"/>
    </source>
</evidence>
<feature type="initiator methionine" description="Removed" evidence="7 26 36 37 40">
    <location>
        <position position="1"/>
    </location>
</feature>
<feature type="chain" id="PRO_0000205778" description="Clathrin heavy chain 1">
    <location>
        <begin position="2"/>
        <end position="1675"/>
    </location>
</feature>
<feature type="repeat" description="CHCR 1" evidence="5 16">
    <location>
        <begin position="537"/>
        <end position="683"/>
    </location>
</feature>
<feature type="repeat" description="CHCR 2" evidence="5 16">
    <location>
        <begin position="686"/>
        <end position="828"/>
    </location>
</feature>
<feature type="repeat" description="CHCR 3" evidence="5 16">
    <location>
        <begin position="833"/>
        <end position="972"/>
    </location>
</feature>
<feature type="repeat" description="CHCR 4" evidence="5 16">
    <location>
        <begin position="979"/>
        <end position="1124"/>
    </location>
</feature>
<feature type="repeat" description="CHCR 5" evidence="5 16">
    <location>
        <begin position="1128"/>
        <end position="1269"/>
    </location>
</feature>
<feature type="repeat" description="CHCR 6" evidence="5 16">
    <location>
        <begin position="1274"/>
        <end position="1420"/>
    </location>
</feature>
<feature type="repeat" description="CHCR 7" evidence="5 16">
    <location>
        <begin position="1423"/>
        <end position="1566"/>
    </location>
</feature>
<feature type="region of interest" description="Globular terminal domain">
    <location>
        <begin position="2"/>
        <end position="479"/>
    </location>
</feature>
<feature type="region of interest" description="WD40-like repeat 1">
    <location>
        <begin position="24"/>
        <end position="67"/>
    </location>
</feature>
<feature type="region of interest" description="WD40-like repeat 2">
    <location>
        <begin position="68"/>
        <end position="107"/>
    </location>
</feature>
<feature type="region of interest" description="WD40-like repeat 3">
    <location>
        <begin position="108"/>
        <end position="149"/>
    </location>
</feature>
<feature type="region of interest" description="WD40-like repeat 4">
    <location>
        <begin position="150"/>
        <end position="195"/>
    </location>
</feature>
<feature type="region of interest" description="WD40-like repeat 5">
    <location>
        <begin position="196"/>
        <end position="257"/>
    </location>
</feature>
<feature type="region of interest" description="WD40-like repeat 6">
    <location>
        <begin position="258"/>
        <end position="301"/>
    </location>
</feature>
<feature type="region of interest" description="WD40-like repeat 7">
    <location>
        <begin position="302"/>
        <end position="330"/>
    </location>
</feature>
<feature type="region of interest" description="Binding site for the uncoating ATPase, involved in lattice disassembly" evidence="4">
    <location>
        <begin position="449"/>
        <end position="465"/>
    </location>
</feature>
<feature type="region of interest" description="Involved in spindle localization and interaction with TACC3" evidence="18">
    <location>
        <begin position="457"/>
        <end position="507"/>
    </location>
</feature>
<feature type="region of interest" description="Flexible linker">
    <location>
        <begin position="480"/>
        <end position="523"/>
    </location>
</feature>
<feature type="region of interest" description="Heavy chain arm">
    <location>
        <begin position="524"/>
        <end position="1675"/>
    </location>
</feature>
<feature type="region of interest" description="Distal segment">
    <location>
        <begin position="524"/>
        <end position="634"/>
    </location>
</feature>
<feature type="region of interest" description="Proximal segment">
    <location>
        <begin position="639"/>
        <end position="1675"/>
    </location>
</feature>
<feature type="region of interest" description="Involved in binding clathrin light chain" evidence="1">
    <location>
        <begin position="1213"/>
        <end position="1522"/>
    </location>
</feature>
<feature type="region of interest" description="Trimerization" evidence="1">
    <location>
        <begin position="1550"/>
        <end position="1675"/>
    </location>
</feature>
<feature type="modified residue" description="N-acetylalanine" evidence="26 36 37 40">
    <location>
        <position position="2"/>
    </location>
</feature>
<feature type="modified residue" description="Phosphoserine" evidence="38">
    <location>
        <position position="67"/>
    </location>
</feature>
<feature type="modified residue" description="Phosphothreonine" evidence="3">
    <location>
        <position position="105"/>
    </location>
</feature>
<feature type="modified residue" description="Phosphotyrosine" evidence="3">
    <location>
        <position position="184"/>
    </location>
</feature>
<feature type="modified residue" description="Phosphothreonine" evidence="32 38 39">
    <location>
        <position position="394"/>
    </location>
</feature>
<feature type="modified residue" description="Phosphotyrosine" evidence="35">
    <location>
        <position position="634"/>
    </location>
</feature>
<feature type="modified residue" description="N6-succinyllysine" evidence="3">
    <location>
        <position position="737"/>
    </location>
</feature>
<feature type="modified residue" description="N6-acetyllysine" evidence="34">
    <location>
        <position position="856"/>
    </location>
</feature>
<feature type="modified residue" description="Phosphotyrosine" evidence="3">
    <location>
        <position position="899"/>
    </location>
</feature>
<feature type="modified residue" description="Phosphoserine" evidence="3">
    <location>
        <position position="1167"/>
    </location>
</feature>
<feature type="modified residue" description="Phosphotyrosine" evidence="3">
    <location>
        <position position="1206"/>
    </location>
</feature>
<feature type="modified residue" description="Phosphoserine" evidence="38">
    <location>
        <position position="1229"/>
    </location>
</feature>
<feature type="modified residue" description="N6-acetyllysine; alternate" evidence="34">
    <location>
        <position position="1441"/>
    </location>
</feature>
<feature type="modified residue" description="N6-succinyllysine; alternate" evidence="3">
    <location>
        <position position="1441"/>
    </location>
</feature>
<feature type="modified residue" description="Phosphotyrosine" evidence="35">
    <location>
        <position position="1477"/>
    </location>
</feature>
<feature type="modified residue" description="Phosphotyrosine" evidence="3">
    <location>
        <position position="1487"/>
    </location>
</feature>
<feature type="modified residue" description="Phosphoserine" evidence="33 38 39">
    <location>
        <position position="1494"/>
    </location>
</feature>
<feature type="modified residue" description="N6-acetyllysine" evidence="34">
    <location>
        <position position="1501"/>
    </location>
</feature>
<feature type="splice variant" id="VSP_011570" description="In isoform 2." evidence="27">
    <original>QPQL</original>
    <variation>NLSL</variation>
    <location>
        <begin position="1636"/>
        <end position="1639"/>
    </location>
</feature>
<feature type="splice variant" id="VSP_011571" description="In isoform 2." evidence="27">
    <location>
        <begin position="1640"/>
        <end position="1675"/>
    </location>
</feature>
<feature type="sequence variant" id="VAR_080721" description="In MRD56; uncertain significance." evidence="24">
    <location>
        <begin position="554"/>
        <end position="556"/>
    </location>
</feature>
<feature type="sequence variant" id="VAR_080722" description="In MRD56; dbSNP:rs1555606635." evidence="24">
    <original>P</original>
    <variation>L</variation>
    <location>
        <position position="890"/>
    </location>
</feature>
<feature type="sequence variant" id="VAR_080723" description="In MRD56; uncertain significance; dbSNP:rs1555607159." evidence="24">
    <original>L</original>
    <variation>P</variation>
    <location>
        <position position="1047"/>
    </location>
</feature>
<feature type="sequence variant" id="VAR_080724" description="In MRD56; uncertain significance." evidence="24">
    <original>W</original>
    <variation>R</variation>
    <location>
        <position position="1108"/>
    </location>
</feature>
<feature type="sequence variant" id="VAR_080725" description="In MRD56." evidence="24">
    <location>
        <begin position="1199"/>
        <end position="1675"/>
    </location>
</feature>
<feature type="sequence variant" id="VAR_080726" description="In MRD56; uncertain significance." evidence="24">
    <location>
        <position position="1207"/>
    </location>
</feature>
<feature type="sequence variant" id="VAR_080727" description="In MRD56." evidence="24">
    <location>
        <begin position="1555"/>
        <end position="1675"/>
    </location>
</feature>
<feature type="sequence variant" id="VAR_080728" description="In MRD56." evidence="24">
    <location>
        <begin position="1556"/>
        <end position="1675"/>
    </location>
</feature>
<feature type="mutagenesis site" description="Disrupts spindle localization." evidence="18">
    <original>P</original>
    <variation>N</variation>
    <location>
        <position position="65"/>
    </location>
</feature>
<feature type="mutagenesis site" description="Disrupts spindle localization." evidence="18">
    <original>S</original>
    <variation>G</variation>
    <location>
        <position position="67"/>
    </location>
</feature>
<feature type="mutagenesis site" description="Disrupts spindle localization." evidence="18">
    <original>T</original>
    <variation>A</variation>
    <location>
        <position position="87"/>
    </location>
</feature>
<feature type="mutagenesis site" description="Disrupts spindle localization." evidence="18">
    <original>Q</original>
    <variation>A</variation>
    <location>
        <position position="89"/>
    </location>
</feature>
<feature type="mutagenesis site" description="Disrupts spindle localization." evidence="18">
    <original>K</original>
    <variation>E</variation>
    <location>
        <position position="96"/>
    </location>
</feature>
<feature type="mutagenesis site" description="Disrupts spindle localization." evidence="18">
    <original>K</original>
    <variation>E</variation>
    <location>
        <position position="98"/>
    </location>
</feature>
<feature type="mutagenesis site" description="Disrupts spindle localization; when associated with E-445, E-500 E-506 and E-507." evidence="18">
    <original>R</original>
    <variation>E</variation>
    <location>
        <position position="444"/>
    </location>
</feature>
<feature type="mutagenesis site" description="Disrupts spindle localization; when associated with E-444, E-500, E-506 and E-507." evidence="18">
    <original>K</original>
    <variation>E</variation>
    <location>
        <position position="445"/>
    </location>
</feature>
<feature type="mutagenesis site" description="Disrupts spindle localization and interaction with TACC3." evidence="18">
    <original>LRANV</original>
    <variation>ERGQC</variation>
    <location>
        <begin position="480"/>
        <end position="484"/>
    </location>
</feature>
<feature type="mutagenesis site" description="Disrupts spindle localization; when associated with E-487, E-500, E-506 and E-507." evidence="18">
    <original>R</original>
    <variation>E</variation>
    <location>
        <position position="481"/>
    </location>
</feature>
<feature type="mutagenesis site" description="Disrupts spindle localization; when associated with E-481, E-500, E-506 and E-507." evidence="18">
    <original>K</original>
    <variation>E</variation>
    <location>
        <position position="487"/>
    </location>
</feature>
<feature type="mutagenesis site" description="Disrupts spindle localization; when associated with E-444, E-445, E-506 and E-507." evidence="18">
    <original>K</original>
    <variation>E</variation>
    <location>
        <position position="500"/>
    </location>
</feature>
<feature type="mutagenesis site" description="Disrupts spindle localization; when associated with E-481, E-487, E-506 and E-507." evidence="18">
    <original>K</original>
    <variation>E</variation>
    <location>
        <position position="500"/>
    </location>
</feature>
<feature type="mutagenesis site" description="Disrupts spindle localization; when associated with E-444, E-445, E-500 and E-507." evidence="18">
    <original>K</original>
    <variation>E</variation>
    <location>
        <position position="506"/>
    </location>
</feature>
<feature type="mutagenesis site" description="Disrupts spindle localization; when associated with E-481, E-487, E-500 and E-507." evidence="18">
    <original>K</original>
    <variation>E</variation>
    <location>
        <position position="506"/>
    </location>
</feature>
<feature type="mutagenesis site" description="Disrupts spindle localization; when associated with E-444, E-445, E-500 and E-506." evidence="18">
    <original>K</original>
    <variation>E</variation>
    <location>
        <position position="507"/>
    </location>
</feature>
<feature type="mutagenesis site" description="Disrupts spindle localization; when associated with E-481, E-487, E-500 and E-506." evidence="18">
    <original>K</original>
    <variation>E</variation>
    <location>
        <position position="507"/>
    </location>
</feature>
<feature type="sequence conflict" description="In Ref. 5; CAA39363." evidence="30" ref="5">
    <original>Q</original>
    <variation>R</variation>
    <location>
        <position position="560"/>
    </location>
</feature>
<feature type="sequence conflict" description="In Ref. 5; CAA39363." evidence="30" ref="5">
    <original>G</original>
    <variation>V</variation>
    <location>
        <position position="817"/>
    </location>
</feature>
<feature type="sequence conflict" description="In Ref. 2; CAE45761." evidence="30" ref="2">
    <original>R</original>
    <variation>H</variation>
    <location>
        <position position="923"/>
    </location>
</feature>
<feature type="sequence conflict" description="In Ref. 2; CAE45761." evidence="30" ref="2">
    <original>R</original>
    <variation>G</variation>
    <location>
        <position position="1563"/>
    </location>
</feature>
<feature type="sequence conflict" description="In Ref. 2; CAE45761." evidence="30" ref="2">
    <original>Q</original>
    <variation>R</variation>
    <location>
        <position position="1652"/>
    </location>
</feature>
<feature type="strand" evidence="41">
    <location>
        <begin position="6"/>
        <end position="14"/>
    </location>
</feature>
<feature type="helix" evidence="41">
    <location>
        <begin position="15"/>
        <end position="18"/>
    </location>
</feature>
<feature type="helix" evidence="41">
    <location>
        <begin position="22"/>
        <end position="24"/>
    </location>
</feature>
<feature type="turn" evidence="41">
    <location>
        <begin position="27"/>
        <end position="29"/>
    </location>
</feature>
<feature type="strand" evidence="41">
    <location>
        <begin position="30"/>
        <end position="34"/>
    </location>
</feature>
<feature type="strand" evidence="41">
    <location>
        <begin position="37"/>
        <end position="44"/>
    </location>
</feature>
<feature type="strand" evidence="41">
    <location>
        <begin position="47"/>
        <end position="54"/>
    </location>
</feature>
<feature type="strand" evidence="41">
    <location>
        <begin position="62"/>
        <end position="64"/>
    </location>
</feature>
<feature type="strand" evidence="41">
    <location>
        <begin position="69"/>
        <end position="73"/>
    </location>
</feature>
<feature type="strand" evidence="41">
    <location>
        <begin position="75"/>
        <end position="84"/>
    </location>
</feature>
<feature type="strand" evidence="41">
    <location>
        <begin position="87"/>
        <end position="92"/>
    </location>
</feature>
<feature type="turn" evidence="41">
    <location>
        <begin position="93"/>
        <end position="96"/>
    </location>
</feature>
<feature type="strand" evidence="41">
    <location>
        <begin position="97"/>
        <end position="103"/>
    </location>
</feature>
<feature type="strand" evidence="41">
    <location>
        <begin position="108"/>
        <end position="113"/>
    </location>
</feature>
<feature type="strand" evidence="41">
    <location>
        <begin position="115"/>
        <end position="135"/>
    </location>
</feature>
<feature type="strand" evidence="41">
    <location>
        <begin position="139"/>
        <end position="143"/>
    </location>
</feature>
<feature type="helix" evidence="41">
    <location>
        <begin position="146"/>
        <end position="148"/>
    </location>
</feature>
<feature type="strand" evidence="41">
    <location>
        <begin position="152"/>
        <end position="158"/>
    </location>
</feature>
<feature type="strand" evidence="41">
    <location>
        <begin position="164"/>
        <end position="173"/>
    </location>
</feature>
<feature type="strand" evidence="41">
    <location>
        <begin position="176"/>
        <end position="185"/>
    </location>
</feature>
<feature type="turn" evidence="41">
    <location>
        <begin position="186"/>
        <end position="189"/>
    </location>
</feature>
<feature type="strand" evidence="41">
    <location>
        <begin position="190"/>
        <end position="194"/>
    </location>
</feature>
<feature type="strand" evidence="41">
    <location>
        <begin position="197"/>
        <end position="204"/>
    </location>
</feature>
<feature type="strand" evidence="41">
    <location>
        <begin position="213"/>
        <end position="222"/>
    </location>
</feature>
<feature type="strand" evidence="41">
    <location>
        <begin position="225"/>
        <end position="232"/>
    </location>
</feature>
<feature type="strand" evidence="41">
    <location>
        <begin position="246"/>
        <end position="249"/>
    </location>
</feature>
<feature type="helix" evidence="41">
    <location>
        <begin position="254"/>
        <end position="256"/>
    </location>
</feature>
<feature type="strand" evidence="41">
    <location>
        <begin position="261"/>
        <end position="267"/>
    </location>
</feature>
<feature type="turn" evidence="41">
    <location>
        <begin position="268"/>
        <end position="271"/>
    </location>
</feature>
<feature type="strand" evidence="41">
    <location>
        <begin position="272"/>
        <end position="277"/>
    </location>
</feature>
<feature type="strand" evidence="41">
    <location>
        <begin position="280"/>
        <end position="286"/>
    </location>
</feature>
<feature type="turn" evidence="41">
    <location>
        <begin position="287"/>
        <end position="289"/>
    </location>
</feature>
<feature type="strand" evidence="41">
    <location>
        <begin position="292"/>
        <end position="297"/>
    </location>
</feature>
<feature type="strand" evidence="41">
    <location>
        <begin position="303"/>
        <end position="309"/>
    </location>
</feature>
<feature type="turn" evidence="41">
    <location>
        <begin position="310"/>
        <end position="313"/>
    </location>
</feature>
<feature type="strand" evidence="41">
    <location>
        <begin position="314"/>
        <end position="319"/>
    </location>
</feature>
<feature type="strand" evidence="41">
    <location>
        <begin position="323"/>
        <end position="329"/>
    </location>
</feature>
<feature type="turn" evidence="41">
    <location>
        <begin position="331"/>
        <end position="333"/>
    </location>
</feature>
<feature type="helix" evidence="41">
    <location>
        <begin position="334"/>
        <end position="340"/>
    </location>
</feature>
<feature type="helix" evidence="41">
    <location>
        <begin position="345"/>
        <end position="354"/>
    </location>
</feature>